<accession>P34520</accession>
<organism>
    <name type="scientific">Caenorhabditis elegans</name>
    <dbReference type="NCBI Taxonomy" id="6239"/>
    <lineage>
        <taxon>Eukaryota</taxon>
        <taxon>Metazoa</taxon>
        <taxon>Ecdysozoa</taxon>
        <taxon>Nematoda</taxon>
        <taxon>Chromadorea</taxon>
        <taxon>Rhabditida</taxon>
        <taxon>Rhabditina</taxon>
        <taxon>Rhabditomorpha</taxon>
        <taxon>Rhabditoidea</taxon>
        <taxon>Rhabditidae</taxon>
        <taxon>Peloderinae</taxon>
        <taxon>Caenorhabditis</taxon>
    </lineage>
</organism>
<name>YM44_CAEEL</name>
<protein>
    <recommendedName>
        <fullName>Uncharacterized protein K11H3.4</fullName>
    </recommendedName>
</protein>
<proteinExistence type="predicted"/>
<reference key="1">
    <citation type="journal article" date="1994" name="Nature">
        <title>2.2 Mb of contiguous nucleotide sequence from chromosome III of C. elegans.</title>
        <authorList>
            <person name="Wilson R."/>
            <person name="Ainscough R."/>
            <person name="Anderson K."/>
            <person name="Baynes C."/>
            <person name="Berks M."/>
            <person name="Bonfield J."/>
            <person name="Burton J."/>
            <person name="Connell M."/>
            <person name="Copsey T."/>
            <person name="Cooper J."/>
            <person name="Coulson A."/>
            <person name="Craxton M."/>
            <person name="Dear S."/>
            <person name="Du Z."/>
            <person name="Durbin R."/>
            <person name="Favello A."/>
            <person name="Fraser A."/>
            <person name="Fulton L."/>
            <person name="Gardner A."/>
            <person name="Green P."/>
            <person name="Hawkins T."/>
            <person name="Hillier L."/>
            <person name="Jier M."/>
            <person name="Johnston L."/>
            <person name="Jones M."/>
            <person name="Kershaw J."/>
            <person name="Kirsten J."/>
            <person name="Laisster N."/>
            <person name="Latreille P."/>
            <person name="Lightning J."/>
            <person name="Lloyd C."/>
            <person name="Mortimore B."/>
            <person name="O'Callaghan M."/>
            <person name="Parsons J."/>
            <person name="Percy C."/>
            <person name="Rifken L."/>
            <person name="Roopra A."/>
            <person name="Saunders D."/>
            <person name="Shownkeen R."/>
            <person name="Sims M."/>
            <person name="Smaldon N."/>
            <person name="Smith A."/>
            <person name="Smith M."/>
            <person name="Sonnhammer E."/>
            <person name="Staden R."/>
            <person name="Sulston J."/>
            <person name="Thierry-Mieg J."/>
            <person name="Thomas K."/>
            <person name="Vaudin M."/>
            <person name="Vaughan K."/>
            <person name="Waterston R."/>
            <person name="Watson A."/>
            <person name="Weinstock L."/>
            <person name="Wilkinson-Sproat J."/>
            <person name="Wohldman P."/>
        </authorList>
    </citation>
    <scope>NUCLEOTIDE SEQUENCE [LARGE SCALE GENOMIC DNA]</scope>
    <source>
        <strain>Bristol N2</strain>
    </source>
</reference>
<reference key="2">
    <citation type="journal article" date="1998" name="Science">
        <title>Genome sequence of the nematode C. elegans: a platform for investigating biology.</title>
        <authorList>
            <consortium name="The C. elegans sequencing consortium"/>
        </authorList>
    </citation>
    <scope>NUCLEOTIDE SEQUENCE [LARGE SCALE GENOMIC DNA]</scope>
    <source>
        <strain>Bristol N2</strain>
    </source>
</reference>
<dbReference type="EMBL" id="Z22180">
    <property type="protein sequence ID" value="CAA80174.4"/>
    <property type="molecule type" value="Genomic_DNA"/>
</dbReference>
<dbReference type="PIR" id="S40757">
    <property type="entry name" value="S40757"/>
</dbReference>
<dbReference type="RefSeq" id="NP_499184.3">
    <property type="nucleotide sequence ID" value="NM_066783.3"/>
</dbReference>
<dbReference type="FunCoup" id="P34520">
    <property type="interactions" value="305"/>
</dbReference>
<dbReference type="STRING" id="6239.K11H3.4.1"/>
<dbReference type="PaxDb" id="6239-K11H3.4"/>
<dbReference type="UCSC" id="K11H3.4">
    <property type="organism name" value="c. elegans"/>
</dbReference>
<dbReference type="WormBase" id="K11H3.4">
    <property type="protein sequence ID" value="CE43485"/>
    <property type="gene ID" value="WBGene00010781"/>
</dbReference>
<dbReference type="eggNOG" id="KOG1862">
    <property type="taxonomic scope" value="Eukaryota"/>
</dbReference>
<dbReference type="HOGENOM" id="CLU_761265_0_0_1"/>
<dbReference type="InParanoid" id="P34520"/>
<dbReference type="PRO" id="PR:P34520"/>
<dbReference type="Proteomes" id="UP000001940">
    <property type="component" value="Chromosome III"/>
</dbReference>
<dbReference type="Bgee" id="WBGene00010781">
    <property type="expression patterns" value="Expressed in adult organism and 3 other cell types or tissues"/>
</dbReference>
<dbReference type="GO" id="GO:0005769">
    <property type="term" value="C:early endosome"/>
    <property type="evidence" value="ECO:0000318"/>
    <property type="project" value="GO_Central"/>
</dbReference>
<dbReference type="GO" id="GO:0035091">
    <property type="term" value="F:phosphatidylinositol binding"/>
    <property type="evidence" value="ECO:0000318"/>
    <property type="project" value="GO_Central"/>
</dbReference>
<dbReference type="GO" id="GO:0007032">
    <property type="term" value="P:endosome organization"/>
    <property type="evidence" value="ECO:0000318"/>
    <property type="project" value="GO_Central"/>
</dbReference>
<dbReference type="GO" id="GO:0008333">
    <property type="term" value="P:endosome to lysosome transport"/>
    <property type="evidence" value="ECO:0000318"/>
    <property type="project" value="GO_Central"/>
</dbReference>
<dbReference type="InterPro" id="IPR051765">
    <property type="entry name" value="PH_domain-containing_F"/>
</dbReference>
<dbReference type="PANTHER" id="PTHR46280:SF3">
    <property type="entry name" value="PLECKSTRIN HOMOLOGY DOMAIN-CONTAINING FAMILY F MEMBER 1 HOMOLOG"/>
    <property type="match status" value="1"/>
</dbReference>
<dbReference type="PANTHER" id="PTHR46280">
    <property type="entry name" value="PLECKSTRIN HOMOLOGY DOMAIN-CONTAINING FAMILY F MEMBER 2-RELATED"/>
    <property type="match status" value="1"/>
</dbReference>
<sequence length="364" mass="41046">MEPGELMEVDTSQELDENTSAKETDQPKDAQNDPEIVCGDSNEVKKESPSVEEDQSSTETMSNEFEVAAAILEQENEDSGQNAPSLGELLSRSVNNYHPEHYSSPPLMRKPDFRFPIINPEKAQGKLFVLYQLIITVPDSLKKFPPYTSETNCLFSENDVDFWIYKVNSVIEQAPSNALILPGFNPDTNVNFSETVGEFINRSKGFVKKPNLEQIKAVIGAVIDIKAAVEYSSMKANRPSKNKVRSKNSNSEQKRTGNFLSQVVENLMTKVDANILSRRVGKLFKNHNECTFCNIKFISFFEMCRHVGSIQLRMKINHLRYQDVHVGTWVRFLASATPQKQTIEDVIDGGSSKKVHSPEIIYID</sequence>
<evidence type="ECO:0000256" key="1">
    <source>
        <dbReference type="SAM" id="MobiDB-lite"/>
    </source>
</evidence>
<keyword id="KW-1185">Reference proteome</keyword>
<feature type="chain" id="PRO_0000065410" description="Uncharacterized protein K11H3.4">
    <location>
        <begin position="1"/>
        <end position="364"/>
    </location>
</feature>
<feature type="region of interest" description="Disordered" evidence="1">
    <location>
        <begin position="1"/>
        <end position="61"/>
    </location>
</feature>
<feature type="compositionally biased region" description="Acidic residues" evidence="1">
    <location>
        <begin position="1"/>
        <end position="17"/>
    </location>
</feature>
<feature type="compositionally biased region" description="Basic and acidic residues" evidence="1">
    <location>
        <begin position="19"/>
        <end position="31"/>
    </location>
</feature>
<gene>
    <name type="ORF">K11H3.4</name>
</gene>